<evidence type="ECO:0000255" key="1">
    <source>
        <dbReference type="HAMAP-Rule" id="MF_01014"/>
    </source>
</evidence>
<protein>
    <recommendedName>
        <fullName evidence="1">1-(5-phosphoribosyl)-5-[(5-phosphoribosylamino)methylideneamino] imidazole-4-carboxamide isomerase</fullName>
        <ecNumber evidence="1">5.3.1.16</ecNumber>
    </recommendedName>
    <alternativeName>
        <fullName evidence="1">Phosphoribosylformimino-5-aminoimidazole carboxamide ribotide isomerase</fullName>
    </alternativeName>
</protein>
<dbReference type="EC" id="5.3.1.16" evidence="1"/>
<dbReference type="EMBL" id="CP000454">
    <property type="protein sequence ID" value="ABK02867.1"/>
    <property type="molecule type" value="Genomic_DNA"/>
</dbReference>
<dbReference type="RefSeq" id="WP_011691334.1">
    <property type="nucleotide sequence ID" value="NC_008541.1"/>
</dbReference>
<dbReference type="SMR" id="A0JUZ7"/>
<dbReference type="STRING" id="290399.Arth_1473"/>
<dbReference type="KEGG" id="art:Arth_1473"/>
<dbReference type="eggNOG" id="COG0106">
    <property type="taxonomic scope" value="Bacteria"/>
</dbReference>
<dbReference type="HOGENOM" id="CLU_048577_1_1_11"/>
<dbReference type="OrthoDB" id="9807749at2"/>
<dbReference type="UniPathway" id="UPA00031">
    <property type="reaction ID" value="UER00009"/>
</dbReference>
<dbReference type="Proteomes" id="UP000000754">
    <property type="component" value="Chromosome"/>
</dbReference>
<dbReference type="GO" id="GO:0005737">
    <property type="term" value="C:cytoplasm"/>
    <property type="evidence" value="ECO:0007669"/>
    <property type="project" value="UniProtKB-SubCell"/>
</dbReference>
<dbReference type="GO" id="GO:0003949">
    <property type="term" value="F:1-(5-phosphoribosyl)-5-[(5-phosphoribosylamino)methylideneamino]imidazole-4-carboxamide isomerase activity"/>
    <property type="evidence" value="ECO:0007669"/>
    <property type="project" value="UniProtKB-UniRule"/>
</dbReference>
<dbReference type="GO" id="GO:0004640">
    <property type="term" value="F:phosphoribosylanthranilate isomerase activity"/>
    <property type="evidence" value="ECO:0007669"/>
    <property type="project" value="InterPro"/>
</dbReference>
<dbReference type="GO" id="GO:0000105">
    <property type="term" value="P:L-histidine biosynthetic process"/>
    <property type="evidence" value="ECO:0007669"/>
    <property type="project" value="UniProtKB-UniRule"/>
</dbReference>
<dbReference type="GO" id="GO:0000162">
    <property type="term" value="P:L-tryptophan biosynthetic process"/>
    <property type="evidence" value="ECO:0007669"/>
    <property type="project" value="InterPro"/>
</dbReference>
<dbReference type="CDD" id="cd04732">
    <property type="entry name" value="HisA"/>
    <property type="match status" value="1"/>
</dbReference>
<dbReference type="FunFam" id="3.20.20.70:FF:000009">
    <property type="entry name" value="1-(5-phosphoribosyl)-5-[(5-phosphoribosylamino)methylideneamino] imidazole-4-carboxamide isomerase"/>
    <property type="match status" value="1"/>
</dbReference>
<dbReference type="Gene3D" id="3.20.20.70">
    <property type="entry name" value="Aldolase class I"/>
    <property type="match status" value="1"/>
</dbReference>
<dbReference type="HAMAP" id="MF_01014">
    <property type="entry name" value="HisA"/>
    <property type="match status" value="1"/>
</dbReference>
<dbReference type="InterPro" id="IPR013785">
    <property type="entry name" value="Aldolase_TIM"/>
</dbReference>
<dbReference type="InterPro" id="IPR006062">
    <property type="entry name" value="His_biosynth"/>
</dbReference>
<dbReference type="InterPro" id="IPR010188">
    <property type="entry name" value="HisA/PriA_Actinobacteria"/>
</dbReference>
<dbReference type="InterPro" id="IPR044524">
    <property type="entry name" value="Isoase_HisA-like"/>
</dbReference>
<dbReference type="InterPro" id="IPR023016">
    <property type="entry name" value="Isoase_HisA-like_bact"/>
</dbReference>
<dbReference type="InterPro" id="IPR011060">
    <property type="entry name" value="RibuloseP-bd_barrel"/>
</dbReference>
<dbReference type="NCBIfam" id="TIGR01919">
    <property type="entry name" value="hisA-trpF"/>
    <property type="match status" value="1"/>
</dbReference>
<dbReference type="PANTHER" id="PTHR43090">
    <property type="entry name" value="1-(5-PHOSPHORIBOSYL)-5-[(5-PHOSPHORIBOSYLAMINO)METHYLIDENEAMINO] IMIDAZOLE-4-CARBOXAMIDE ISOMERASE"/>
    <property type="match status" value="1"/>
</dbReference>
<dbReference type="PANTHER" id="PTHR43090:SF2">
    <property type="entry name" value="1-(5-PHOSPHORIBOSYL)-5-[(5-PHOSPHORIBOSYLAMINO)METHYLIDENEAMINO] IMIDAZOLE-4-CARBOXAMIDE ISOMERASE"/>
    <property type="match status" value="1"/>
</dbReference>
<dbReference type="Pfam" id="PF00977">
    <property type="entry name" value="His_biosynth"/>
    <property type="match status" value="1"/>
</dbReference>
<dbReference type="SUPFAM" id="SSF51366">
    <property type="entry name" value="Ribulose-phoshate binding barrel"/>
    <property type="match status" value="1"/>
</dbReference>
<comment type="catalytic activity">
    <reaction evidence="1">
        <text>1-(5-phospho-beta-D-ribosyl)-5-[(5-phospho-beta-D-ribosylamino)methylideneamino]imidazole-4-carboxamide = 5-[(5-phospho-1-deoxy-D-ribulos-1-ylimino)methylamino]-1-(5-phospho-beta-D-ribosyl)imidazole-4-carboxamide</text>
        <dbReference type="Rhea" id="RHEA:15469"/>
        <dbReference type="ChEBI" id="CHEBI:58435"/>
        <dbReference type="ChEBI" id="CHEBI:58525"/>
        <dbReference type="EC" id="5.3.1.16"/>
    </reaction>
</comment>
<comment type="pathway">
    <text evidence="1">Amino-acid biosynthesis; L-histidine biosynthesis; L-histidine from 5-phospho-alpha-D-ribose 1-diphosphate: step 4/9.</text>
</comment>
<comment type="subcellular location">
    <subcellularLocation>
        <location evidence="1">Cytoplasm</location>
    </subcellularLocation>
</comment>
<comment type="similarity">
    <text evidence="1">Belongs to the HisA/HisF family.</text>
</comment>
<keyword id="KW-0028">Amino-acid biosynthesis</keyword>
<keyword id="KW-0963">Cytoplasm</keyword>
<keyword id="KW-0368">Histidine biosynthesis</keyword>
<keyword id="KW-0413">Isomerase</keyword>
<keyword id="KW-1185">Reference proteome</keyword>
<name>HIS4_ARTS2</name>
<gene>
    <name evidence="1" type="primary">hisA</name>
    <name type="ordered locus">Arth_1473</name>
</gene>
<feature type="chain" id="PRO_0000290448" description="1-(5-phosphoribosyl)-5-[(5-phosphoribosylamino)methylideneamino] imidazole-4-carboxamide isomerase">
    <location>
        <begin position="1"/>
        <end position="248"/>
    </location>
</feature>
<feature type="active site" description="Proton acceptor" evidence="1">
    <location>
        <position position="17"/>
    </location>
</feature>
<feature type="active site" description="Proton donor" evidence="1">
    <location>
        <position position="136"/>
    </location>
</feature>
<organism>
    <name type="scientific">Arthrobacter sp. (strain FB24)</name>
    <dbReference type="NCBI Taxonomy" id="290399"/>
    <lineage>
        <taxon>Bacteria</taxon>
        <taxon>Bacillati</taxon>
        <taxon>Actinomycetota</taxon>
        <taxon>Actinomycetes</taxon>
        <taxon>Micrococcales</taxon>
        <taxon>Micrococcaceae</taxon>
        <taxon>Arthrobacter</taxon>
    </lineage>
</organism>
<sequence>MTTETPLPVLELLPAVDVVNGQAVRLVQGEAGSETSYGTPLEAALNWQEQGAEWVHLVDLDAAFGRGSNAELLREVVGRLDIKVELSGGLRDDESLEKALDLGVARVNLGTAALENPEWTARAIDRFGDKIAVGLDVRGTTLAGRGWTKEGGDLWDVLARLEEAGCARYVVTDVTKDGTLQGPNVELLRKMVERTGKPVVASGGISSLEDLKVLRSLVPLGVEGAIVGKALYAGAFTLPEALDVAGRR</sequence>
<reference key="1">
    <citation type="journal article" date="2013" name="Stand. Genomic Sci.">
        <title>Complete genome sequence of Arthrobacter sp. strain FB24.</title>
        <authorList>
            <person name="Nakatsu C.H."/>
            <person name="Barabote R."/>
            <person name="Thompson S."/>
            <person name="Bruce D."/>
            <person name="Detter C."/>
            <person name="Brettin T."/>
            <person name="Han C."/>
            <person name="Beasley F."/>
            <person name="Chen W."/>
            <person name="Konopka A."/>
            <person name="Xie G."/>
        </authorList>
    </citation>
    <scope>NUCLEOTIDE SEQUENCE [LARGE SCALE GENOMIC DNA]</scope>
    <source>
        <strain>FB24</strain>
    </source>
</reference>
<accession>A0JUZ7</accession>
<proteinExistence type="inferred from homology"/>